<reference key="1">
    <citation type="journal article" date="1986" name="Agric. Biol. Chem.">
        <title>Rhizopus raw-starch-degrading glucoamylase: its cloning and expression in yeast.</title>
        <authorList>
            <person name="Ashikari T."/>
            <person name="Nakamura N."/>
            <person name="Tanaka Y."/>
            <person name="Kiuchi N."/>
            <person name="Shibano Y."/>
            <person name="Tanaka T."/>
            <person name="Amachi T."/>
            <person name="Yoshizumi H."/>
        </authorList>
        <dbReference type="AGRICOLA" id="IND86045328"/>
    </citation>
    <scope>NUCLEOTIDE SEQUENCE [GENOMIC DNA]</scope>
    <source>
        <strain>SAM0034</strain>
    </source>
</reference>
<reference key="2">
    <citation type="journal article" date="1986" name="Agric. Biol. Chem.">
        <title>Comparison of amino acid sequences of three glucoamylases and their structure-function relationships.</title>
        <authorList>
            <person name="Tanaka Y."/>
            <person name="Ashikari T."/>
            <person name="Nakamura N."/>
            <person name="Kiuchi N."/>
            <person name="Shibano Y."/>
            <person name="Amachi T."/>
            <person name="Yoshizumi H."/>
        </authorList>
        <dbReference type="AGRICOLA" id="IND86045329"/>
    </citation>
    <scope>HOMOLOGY</scope>
    <scope>PREDICTED SECONDARY STRUCTURE</scope>
</reference>
<comment type="catalytic activity">
    <reaction>
        <text>Hydrolysis of terminal (1-&gt;4)-linked alpha-D-glucose residues successively from non-reducing ends of the chains with release of beta-D-glucose.</text>
        <dbReference type="EC" id="3.2.1.3"/>
    </reaction>
</comment>
<comment type="miscellaneous">
    <text>Rhizopus glucoamylase exists in multiple forms, Gluc 1, Gluc 2, and Gluc 3, all of which hydrolyze gelatinized starch at similar rates, but only the largest one (Gluc 1) is able to adsorb raw starch.</text>
</comment>
<comment type="miscellaneous">
    <text>Glucoamylase 3 may be 110-604 instead of 116-604.</text>
</comment>
<comment type="similarity">
    <text evidence="6">Belongs to the glycosyl hydrolase 15 family.</text>
</comment>
<protein>
    <recommendedName>
        <fullName>Glucoamylase 1</fullName>
        <shortName>Gluc 1</shortName>
        <ecNumber>3.2.1.3</ecNumber>
    </recommendedName>
    <alternativeName>
        <fullName>1,4-alpha-D-glucan glucohydrolase</fullName>
    </alternativeName>
    <alternativeName>
        <fullName>Glucan 1,4-alpha-glucosidase</fullName>
    </alternativeName>
    <component>
        <recommendedName>
            <fullName>Glucoamylase 2</fullName>
            <shortName>Gluc 2</shortName>
        </recommendedName>
    </component>
    <component>
        <recommendedName>
            <fullName>Glucoamylase 3</fullName>
            <shortName>Gluc 3</shortName>
        </recommendedName>
    </component>
</protein>
<sequence length="604" mass="65162">MQLFNLPLKVSFFLVLSYFSLLVSAASIPSSASVQLDSYNYDGSTFSGKIYVKNIAYSKKVTVIYADGSDNWNNNGNTIAASYSAPISGSNYEYWTFSASINGIKEFYIKYEVSGKTYYDNNNSANYQVSTSKPTTTTATATTTTAPSTSTTTPPSRSEPATFPTGNSTISSWIKKQEGISRFAMLRNINPPGSATGFIAASLSTAGPDYYYAWTRDAALTSNVIVYEYNTTLSGNKTILNVLKDYVTFSVKTQSTSTVCNCLGEPKFNPDASGYTGAWGRPQNDGPAERATTFILFADSYLTQTKDASYVTGTLKPAIFKDLDYVVNVWSNGCFDLWEEVNGVHFYTLMVMRKGLLLGADFAKRNGDSTRASTYSSTASTIANKISSFWVSSNNWIQVSQSVTGGVSKKGLDVSTLLAANLGSVDDGFFTPGSEKILATAVAVEDSFASLYPINKNLPSYLGNSIGRYPEDTYNGNGNSQGNSWFLAVTGYAELYYRAIKEWIGNGGVTVSSISLPFFKKFDSSATSGKKYTVGTSDFNNLAQNIALAADRFLSTVQLHAHNNGSLAEEFDRTTGLSTGARDLTWSHASLITASYAKAGAPAA</sequence>
<organism>
    <name type="scientific">Rhizopus oryzae</name>
    <name type="common">Mucormycosis agent</name>
    <name type="synonym">Rhizopus arrhizus var. delemar</name>
    <dbReference type="NCBI Taxonomy" id="64495"/>
    <lineage>
        <taxon>Eukaryota</taxon>
        <taxon>Fungi</taxon>
        <taxon>Fungi incertae sedis</taxon>
        <taxon>Mucoromycota</taxon>
        <taxon>Mucoromycotina</taxon>
        <taxon>Mucoromycetes</taxon>
        <taxon>Mucorales</taxon>
        <taxon>Mucorineae</taxon>
        <taxon>Rhizopodaceae</taxon>
        <taxon>Rhizopus</taxon>
    </lineage>
</organism>
<dbReference type="EC" id="3.2.1.3"/>
<dbReference type="EMBL" id="D00049">
    <property type="protein sequence ID" value="BAA00033.1"/>
    <property type="molecule type" value="Genomic_DNA"/>
</dbReference>
<dbReference type="PIR" id="JP0001">
    <property type="entry name" value="JP0001"/>
</dbReference>
<dbReference type="PDB" id="2DJM">
    <property type="method" value="NMR"/>
    <property type="chains" value="A=26-131"/>
</dbReference>
<dbReference type="PDBsum" id="2DJM"/>
<dbReference type="SMR" id="P07683"/>
<dbReference type="BindingDB" id="P07683"/>
<dbReference type="ChEMBL" id="CHEMBL4449"/>
<dbReference type="CAZy" id="CBM21">
    <property type="family name" value="Carbohydrate-Binding Module Family 21"/>
</dbReference>
<dbReference type="CAZy" id="GH15">
    <property type="family name" value="Glycoside Hydrolase Family 15"/>
</dbReference>
<dbReference type="BRENDA" id="3.2.1.3">
    <property type="organism ID" value="5365"/>
</dbReference>
<dbReference type="EvolutionaryTrace" id="P07683"/>
<dbReference type="GO" id="GO:0000324">
    <property type="term" value="C:fungal-type vacuole"/>
    <property type="evidence" value="ECO:0007669"/>
    <property type="project" value="TreeGrafter"/>
</dbReference>
<dbReference type="GO" id="GO:0004339">
    <property type="term" value="F:glucan 1,4-alpha-glucosidase activity"/>
    <property type="evidence" value="ECO:0007669"/>
    <property type="project" value="UniProtKB-EC"/>
</dbReference>
<dbReference type="GO" id="GO:0000272">
    <property type="term" value="P:polysaccharide catabolic process"/>
    <property type="evidence" value="ECO:0007669"/>
    <property type="project" value="UniProtKB-KW"/>
</dbReference>
<dbReference type="Gene3D" id="1.50.10.10">
    <property type="match status" value="1"/>
</dbReference>
<dbReference type="Gene3D" id="2.60.40.2440">
    <property type="entry name" value="Carbohydrate binding type-21 domain"/>
    <property type="match status" value="1"/>
</dbReference>
<dbReference type="InterPro" id="IPR008928">
    <property type="entry name" value="6-hairpin_glycosidase_sf"/>
</dbReference>
<dbReference type="InterPro" id="IPR012341">
    <property type="entry name" value="6hp_glycosidase-like_sf"/>
</dbReference>
<dbReference type="InterPro" id="IPR005036">
    <property type="entry name" value="CBM21_dom"/>
</dbReference>
<dbReference type="InterPro" id="IPR038175">
    <property type="entry name" value="CBM21_dom_sf"/>
</dbReference>
<dbReference type="InterPro" id="IPR011613">
    <property type="entry name" value="GH15-like"/>
</dbReference>
<dbReference type="InterPro" id="IPR000165">
    <property type="entry name" value="Glucoamylase"/>
</dbReference>
<dbReference type="InterPro" id="IPR046966">
    <property type="entry name" value="Glucoamylase_active_site"/>
</dbReference>
<dbReference type="PANTHER" id="PTHR31616:SF12">
    <property type="entry name" value="GLUCOAMYLASE"/>
    <property type="match status" value="1"/>
</dbReference>
<dbReference type="PANTHER" id="PTHR31616">
    <property type="entry name" value="TREHALASE"/>
    <property type="match status" value="1"/>
</dbReference>
<dbReference type="Pfam" id="PF03370">
    <property type="entry name" value="CBM_21"/>
    <property type="match status" value="1"/>
</dbReference>
<dbReference type="Pfam" id="PF00723">
    <property type="entry name" value="Glyco_hydro_15"/>
    <property type="match status" value="1"/>
</dbReference>
<dbReference type="PRINTS" id="PR00736">
    <property type="entry name" value="GLHYDRLASE15"/>
</dbReference>
<dbReference type="SUPFAM" id="SSF48208">
    <property type="entry name" value="Six-hairpin glycosidases"/>
    <property type="match status" value="1"/>
</dbReference>
<dbReference type="PROSITE" id="PS51159">
    <property type="entry name" value="CBM21"/>
    <property type="match status" value="1"/>
</dbReference>
<dbReference type="PROSITE" id="PS00820">
    <property type="entry name" value="GLUCOAMYLASE"/>
    <property type="match status" value="1"/>
</dbReference>
<evidence type="ECO:0000250" key="1"/>
<evidence type="ECO:0000255" key="2"/>
<evidence type="ECO:0000255" key="3">
    <source>
        <dbReference type="PROSITE-ProRule" id="PRU00491"/>
    </source>
</evidence>
<evidence type="ECO:0000255" key="4">
    <source>
        <dbReference type="PROSITE-ProRule" id="PRU10051"/>
    </source>
</evidence>
<evidence type="ECO:0000256" key="5">
    <source>
        <dbReference type="SAM" id="MobiDB-lite"/>
    </source>
</evidence>
<evidence type="ECO:0000305" key="6"/>
<evidence type="ECO:0007829" key="7">
    <source>
        <dbReference type="PDB" id="2DJM"/>
    </source>
</evidence>
<proteinExistence type="evidence at protein level"/>
<feature type="signal peptide">
    <location>
        <begin position="1"/>
        <end position="25"/>
    </location>
</feature>
<feature type="chain" id="PRO_0000001472" description="Glucoamylase 1">
    <location>
        <begin position="26"/>
        <end position="604"/>
    </location>
</feature>
<feature type="chain" id="PRO_0000001473" description="Glucoamylase 3">
    <location>
        <begin position="116"/>
        <end position="604"/>
    </location>
</feature>
<feature type="chain" id="PRO_0000001474" description="Glucoamylase 2">
    <location>
        <begin position="159"/>
        <end position="604"/>
    </location>
</feature>
<feature type="domain" description="CBM21" evidence="3">
    <location>
        <begin position="26"/>
        <end position="130"/>
    </location>
</feature>
<feature type="region of interest" description="Adsorption to raw starch">
    <location>
        <begin position="26"/>
        <end position="115"/>
    </location>
</feature>
<feature type="region of interest" description="Starch degradation">
    <location>
        <begin position="116"/>
        <end position="604"/>
    </location>
</feature>
<feature type="region of interest" description="Disordered" evidence="5">
    <location>
        <begin position="127"/>
        <end position="164"/>
    </location>
</feature>
<feature type="compositionally biased region" description="Low complexity" evidence="5">
    <location>
        <begin position="130"/>
        <end position="162"/>
    </location>
</feature>
<feature type="active site" description="Proton acceptor" evidence="4">
    <location>
        <position position="336"/>
    </location>
</feature>
<feature type="active site" description="Proton donor" evidence="4">
    <location>
        <position position="339"/>
    </location>
</feature>
<feature type="binding site" evidence="1">
    <location>
        <position position="279"/>
    </location>
    <ligand>
        <name>substrate</name>
    </ligand>
</feature>
<feature type="glycosylation site" description="N-linked (GlcNAc...) asparagine" evidence="2">
    <location>
        <position position="122"/>
    </location>
</feature>
<feature type="glycosylation site" description="N-linked (GlcNAc...) asparagine" evidence="2">
    <location>
        <position position="167"/>
    </location>
</feature>
<feature type="glycosylation site" description="N-linked (GlcNAc...) asparagine" evidence="2">
    <location>
        <position position="230"/>
    </location>
</feature>
<feature type="glycosylation site" description="N-linked (GlcNAc...) asparagine" evidence="2">
    <location>
        <position position="236"/>
    </location>
</feature>
<feature type="glycosylation site" description="N-linked (GlcNAc...) asparagine" evidence="2">
    <location>
        <position position="564"/>
    </location>
</feature>
<feature type="strand" evidence="7">
    <location>
        <begin position="30"/>
        <end position="44"/>
    </location>
</feature>
<feature type="strand" evidence="7">
    <location>
        <begin position="46"/>
        <end position="52"/>
    </location>
</feature>
<feature type="strand" evidence="7">
    <location>
        <begin position="55"/>
        <end position="57"/>
    </location>
</feature>
<feature type="strand" evidence="7">
    <location>
        <begin position="59"/>
        <end position="67"/>
    </location>
</feature>
<feature type="strand" evidence="7">
    <location>
        <begin position="78"/>
        <end position="80"/>
    </location>
</feature>
<feature type="strand" evidence="7">
    <location>
        <begin position="82"/>
        <end position="86"/>
    </location>
</feature>
<feature type="strand" evidence="7">
    <location>
        <begin position="93"/>
        <end position="99"/>
    </location>
</feature>
<feature type="strand" evidence="7">
    <location>
        <begin position="102"/>
        <end position="115"/>
    </location>
</feature>
<feature type="strand" evidence="7">
    <location>
        <begin position="117"/>
        <end position="120"/>
    </location>
</feature>
<feature type="strand" evidence="7">
    <location>
        <begin position="122"/>
        <end position="125"/>
    </location>
</feature>
<keyword id="KW-0002">3D-structure</keyword>
<keyword id="KW-0119">Carbohydrate metabolism</keyword>
<keyword id="KW-0325">Glycoprotein</keyword>
<keyword id="KW-0326">Glycosidase</keyword>
<keyword id="KW-0378">Hydrolase</keyword>
<keyword id="KW-0624">Polysaccharide degradation</keyword>
<keyword id="KW-0732">Signal</keyword>
<accession>P07683</accession>
<name>AMYG_RHIOR</name>